<comment type="function">
    <text evidence="1">Allows the formation of correctly charged Asn-tRNA(Asn) or Gln-tRNA(Gln) through the transamidation of misacylated Asp-tRNA(Asn) or Glu-tRNA(Gln) in organisms which lack either or both of asparaginyl-tRNA or glutaminyl-tRNA synthetases. The reaction takes place in the presence of glutamine and ATP through an activated phospho-Asp-tRNA(Asn) or phospho-Glu-tRNA(Gln) (By similarity).</text>
</comment>
<comment type="catalytic activity">
    <reaction>
        <text>L-glutamyl-tRNA(Gln) + L-glutamine + ATP + H2O = L-glutaminyl-tRNA(Gln) + L-glutamate + ADP + phosphate + H(+)</text>
        <dbReference type="Rhea" id="RHEA:17521"/>
        <dbReference type="Rhea" id="RHEA-COMP:9681"/>
        <dbReference type="Rhea" id="RHEA-COMP:9684"/>
        <dbReference type="ChEBI" id="CHEBI:15377"/>
        <dbReference type="ChEBI" id="CHEBI:15378"/>
        <dbReference type="ChEBI" id="CHEBI:29985"/>
        <dbReference type="ChEBI" id="CHEBI:30616"/>
        <dbReference type="ChEBI" id="CHEBI:43474"/>
        <dbReference type="ChEBI" id="CHEBI:58359"/>
        <dbReference type="ChEBI" id="CHEBI:78520"/>
        <dbReference type="ChEBI" id="CHEBI:78521"/>
        <dbReference type="ChEBI" id="CHEBI:456216"/>
    </reaction>
</comment>
<comment type="catalytic activity">
    <reaction>
        <text>L-aspartyl-tRNA(Asn) + L-glutamine + ATP + H2O = L-asparaginyl-tRNA(Asn) + L-glutamate + ADP + phosphate + 2 H(+)</text>
        <dbReference type="Rhea" id="RHEA:14513"/>
        <dbReference type="Rhea" id="RHEA-COMP:9674"/>
        <dbReference type="Rhea" id="RHEA-COMP:9677"/>
        <dbReference type="ChEBI" id="CHEBI:15377"/>
        <dbReference type="ChEBI" id="CHEBI:15378"/>
        <dbReference type="ChEBI" id="CHEBI:29985"/>
        <dbReference type="ChEBI" id="CHEBI:30616"/>
        <dbReference type="ChEBI" id="CHEBI:43474"/>
        <dbReference type="ChEBI" id="CHEBI:58359"/>
        <dbReference type="ChEBI" id="CHEBI:78515"/>
        <dbReference type="ChEBI" id="CHEBI:78516"/>
        <dbReference type="ChEBI" id="CHEBI:456216"/>
    </reaction>
</comment>
<comment type="subunit">
    <text evidence="1">Heterotrimer of A, B and C subunits.</text>
</comment>
<comment type="similarity">
    <text evidence="2">Belongs to the GatB/GatE family. GatB subfamily.</text>
</comment>
<keyword id="KW-0067">ATP-binding</keyword>
<keyword id="KW-0436">Ligase</keyword>
<keyword id="KW-0547">Nucleotide-binding</keyword>
<keyword id="KW-0648">Protein biosynthesis</keyword>
<keyword id="KW-1185">Reference proteome</keyword>
<reference key="1">
    <citation type="journal article" date="2001" name="J. Bacteriol.">
        <title>Genome sequence and comparative analysis of the solvent-producing bacterium Clostridium acetobutylicum.</title>
        <authorList>
            <person name="Noelling J."/>
            <person name="Breton G."/>
            <person name="Omelchenko M.V."/>
            <person name="Makarova K.S."/>
            <person name="Zeng Q."/>
            <person name="Gibson R."/>
            <person name="Lee H.M."/>
            <person name="Dubois J."/>
            <person name="Qiu D."/>
            <person name="Hitti J."/>
            <person name="Wolf Y.I."/>
            <person name="Tatusov R.L."/>
            <person name="Sabathe F."/>
            <person name="Doucette-Stamm L.A."/>
            <person name="Soucaille P."/>
            <person name="Daly M.J."/>
            <person name="Bennett G.N."/>
            <person name="Koonin E.V."/>
            <person name="Smith D.R."/>
        </authorList>
    </citation>
    <scope>NUCLEOTIDE SEQUENCE [LARGE SCALE GENOMIC DNA]</scope>
    <source>
        <strain>ATCC 824 / DSM 792 / JCM 1419 / IAM 19013 / LMG 5710 / NBRC 13948 / NRRL B-527 / VKM B-1787 / 2291 / W</strain>
    </source>
</reference>
<gene>
    <name type="primary">gatB2</name>
    <name type="ordered locus">CA_C2976</name>
</gene>
<organism>
    <name type="scientific">Clostridium acetobutylicum (strain ATCC 824 / DSM 792 / JCM 1419 / IAM 19013 / LMG 5710 / NBRC 13948 / NRRL B-527 / VKM B-1787 / 2291 / W)</name>
    <dbReference type="NCBI Taxonomy" id="272562"/>
    <lineage>
        <taxon>Bacteria</taxon>
        <taxon>Bacillati</taxon>
        <taxon>Bacillota</taxon>
        <taxon>Clostridia</taxon>
        <taxon>Eubacteriales</taxon>
        <taxon>Clostridiaceae</taxon>
        <taxon>Clostridium</taxon>
    </lineage>
</organism>
<evidence type="ECO:0000250" key="1"/>
<evidence type="ECO:0000305" key="2"/>
<accession>Q97EX9</accession>
<name>GATB2_CLOAB</name>
<proteinExistence type="inferred from homology"/>
<sequence length="478" mass="54639">MSYETVIGLEVHAELSTKTKIFCNCSTKFGAKPNENTCPICMGLPGTLPVLNEEVVHLAVKAGEALHCKINKLNKMDRKNYFYPDLPKAYQISQFDIPICSGGYVEIPTKDGVKKVRLNRIHIEEDAGKLVHLEYEPHSLIDYNRVGVPLVEIVSEPDMRSPEEAVEFMKTLRAMLQYANISDCRMDQGSMRCDANISLREVGSTEYNTKVEIKNINSFRELQKALEKEEKRQKELYDFNEGFRIKQETRRWDSGKGKTVTMRTKEDANDYRYFPEPDIIPIVVKDELLEKVKEEMPELPVERKARFEDQYKLGSKEIEILIEDKALADYFEKLVEAGCESKTASNWILGDMLRLMRETETDSKAIPVPVEHMNQLIEMIKTKEISNTAAKEVFEEMFKTSKEPKVVVKEKGLSQISDESALQKMVEDVINNNEKSVLDYKAGKKQAIGYLVGQVMKQSKGKANPPMVKELLEKVLSE</sequence>
<feature type="chain" id="PRO_0000148782" description="Aspartyl/glutamyl-tRNA(Asn/Gln) amidotransferase subunit B 2">
    <location>
        <begin position="1"/>
        <end position="478"/>
    </location>
</feature>
<dbReference type="EC" id="6.3.5.-"/>
<dbReference type="EMBL" id="AE001437">
    <property type="protein sequence ID" value="AAK80918.1"/>
    <property type="molecule type" value="Genomic_DNA"/>
</dbReference>
<dbReference type="PIR" id="C97266">
    <property type="entry name" value="C97266"/>
</dbReference>
<dbReference type="RefSeq" id="NP_349578.1">
    <property type="nucleotide sequence ID" value="NC_003030.1"/>
</dbReference>
<dbReference type="SMR" id="Q97EX9"/>
<dbReference type="STRING" id="272562.CA_C2976"/>
<dbReference type="KEGG" id="cac:CA_C2976"/>
<dbReference type="PATRIC" id="fig|272562.8.peg.3161"/>
<dbReference type="eggNOG" id="COG0064">
    <property type="taxonomic scope" value="Bacteria"/>
</dbReference>
<dbReference type="HOGENOM" id="CLU_019240_0_0_9"/>
<dbReference type="OrthoDB" id="9804078at2"/>
<dbReference type="Proteomes" id="UP000000814">
    <property type="component" value="Chromosome"/>
</dbReference>
<dbReference type="GO" id="GO:0050566">
    <property type="term" value="F:asparaginyl-tRNA synthase (glutamine-hydrolyzing) activity"/>
    <property type="evidence" value="ECO:0007669"/>
    <property type="project" value="RHEA"/>
</dbReference>
<dbReference type="GO" id="GO:0005524">
    <property type="term" value="F:ATP binding"/>
    <property type="evidence" value="ECO:0007669"/>
    <property type="project" value="UniProtKB-KW"/>
</dbReference>
<dbReference type="GO" id="GO:0050567">
    <property type="term" value="F:glutaminyl-tRNA synthase (glutamine-hydrolyzing) activity"/>
    <property type="evidence" value="ECO:0007669"/>
    <property type="project" value="UniProtKB-UniRule"/>
</dbReference>
<dbReference type="GO" id="GO:0006412">
    <property type="term" value="P:translation"/>
    <property type="evidence" value="ECO:0007669"/>
    <property type="project" value="UniProtKB-UniRule"/>
</dbReference>
<dbReference type="FunFam" id="1.10.10.410:FF:000001">
    <property type="entry name" value="Aspartyl/glutamyl-tRNA(Asn/Gln) amidotransferase subunit B"/>
    <property type="match status" value="1"/>
</dbReference>
<dbReference type="Gene3D" id="1.10.10.410">
    <property type="match status" value="1"/>
</dbReference>
<dbReference type="Gene3D" id="1.10.150.380">
    <property type="entry name" value="GatB domain, N-terminal subdomain"/>
    <property type="match status" value="1"/>
</dbReference>
<dbReference type="HAMAP" id="MF_00121">
    <property type="entry name" value="GatB"/>
    <property type="match status" value="1"/>
</dbReference>
<dbReference type="InterPro" id="IPR017959">
    <property type="entry name" value="Asn/Gln-tRNA_amidoTrfase_suB/E"/>
</dbReference>
<dbReference type="InterPro" id="IPR006075">
    <property type="entry name" value="Asn/Gln-tRNA_Trfase_suB/E_cat"/>
</dbReference>
<dbReference type="InterPro" id="IPR018027">
    <property type="entry name" value="Asn/Gln_amidotransferase"/>
</dbReference>
<dbReference type="InterPro" id="IPR003789">
    <property type="entry name" value="Asn/Gln_tRNA_amidoTrase-B-like"/>
</dbReference>
<dbReference type="InterPro" id="IPR004413">
    <property type="entry name" value="GatB"/>
</dbReference>
<dbReference type="InterPro" id="IPR042114">
    <property type="entry name" value="GatB_C_1"/>
</dbReference>
<dbReference type="InterPro" id="IPR023168">
    <property type="entry name" value="GatB_Yqey_C_2"/>
</dbReference>
<dbReference type="InterPro" id="IPR017958">
    <property type="entry name" value="Gln-tRNA_amidoTrfase_suB_CS"/>
</dbReference>
<dbReference type="InterPro" id="IPR014746">
    <property type="entry name" value="Gln_synth/guanido_kin_cat_dom"/>
</dbReference>
<dbReference type="NCBIfam" id="TIGR00133">
    <property type="entry name" value="gatB"/>
    <property type="match status" value="1"/>
</dbReference>
<dbReference type="NCBIfam" id="NF004012">
    <property type="entry name" value="PRK05477.1-2"/>
    <property type="match status" value="1"/>
</dbReference>
<dbReference type="NCBIfam" id="NF004014">
    <property type="entry name" value="PRK05477.1-4"/>
    <property type="match status" value="1"/>
</dbReference>
<dbReference type="PANTHER" id="PTHR11659">
    <property type="entry name" value="GLUTAMYL-TRNA GLN AMIDOTRANSFERASE SUBUNIT B MITOCHONDRIAL AND PROKARYOTIC PET112-RELATED"/>
    <property type="match status" value="1"/>
</dbReference>
<dbReference type="Pfam" id="PF02934">
    <property type="entry name" value="GatB_N"/>
    <property type="match status" value="1"/>
</dbReference>
<dbReference type="Pfam" id="PF02637">
    <property type="entry name" value="GatB_Yqey"/>
    <property type="match status" value="1"/>
</dbReference>
<dbReference type="SMART" id="SM00845">
    <property type="entry name" value="GatB_Yqey"/>
    <property type="match status" value="1"/>
</dbReference>
<dbReference type="SUPFAM" id="SSF89095">
    <property type="entry name" value="GatB/YqeY motif"/>
    <property type="match status" value="1"/>
</dbReference>
<dbReference type="SUPFAM" id="SSF55931">
    <property type="entry name" value="Glutamine synthetase/guanido kinase"/>
    <property type="match status" value="1"/>
</dbReference>
<dbReference type="PROSITE" id="PS01234">
    <property type="entry name" value="GATB"/>
    <property type="match status" value="1"/>
</dbReference>
<protein>
    <recommendedName>
        <fullName>Aspartyl/glutamyl-tRNA(Asn/Gln) amidotransferase subunit B 2</fullName>
        <shortName>Asp/Glu-ADT subunit B 2</shortName>
        <ecNumber>6.3.5.-</ecNumber>
    </recommendedName>
</protein>